<reference key="1">
    <citation type="journal article" date="1997" name="J. Antimicrob. Chemother.">
        <title>Plasmid-encoded fosfomycin resistance in bacteria isolated from the urinary tract in a multicentre survey.</title>
        <authorList>
            <person name="Arca P."/>
            <person name="Reguera G."/>
            <person name="Hardisson C."/>
        </authorList>
    </citation>
    <scope>NUCLEOTIDE SEQUENCE [GENOMIC DNA]</scope>
    <source>
        <strain>1993</strain>
    </source>
</reference>
<name>FOSB_STAHA</name>
<sequence>MIKGINHITYSVSNIAKSIEFYRDILGADILVESETSAYFNLGGIWLALNEEKNIPRSEIKYSYTHIAFTISDNDFEDWYNWLKENEVNILEGRDRDIRDKKSIYFTDLDGHKLELHTGSLEDRLSYYKEAKPHMNFYI</sequence>
<evidence type="ECO:0000255" key="1">
    <source>
        <dbReference type="HAMAP-Rule" id="MF_01512"/>
    </source>
</evidence>
<evidence type="ECO:0000255" key="2">
    <source>
        <dbReference type="PROSITE-ProRule" id="PRU01163"/>
    </source>
</evidence>
<protein>
    <recommendedName>
        <fullName evidence="1">Metallothiol transferase FosB</fullName>
        <ecNumber evidence="1">2.5.1.-</ecNumber>
    </recommendedName>
    <alternativeName>
        <fullName evidence="1">Fosfomycin resistance protein</fullName>
    </alternativeName>
</protein>
<organism>
    <name type="scientific">Staphylococcus haemolyticus</name>
    <dbReference type="NCBI Taxonomy" id="1283"/>
    <lineage>
        <taxon>Bacteria</taxon>
        <taxon>Bacillati</taxon>
        <taxon>Bacillota</taxon>
        <taxon>Bacilli</taxon>
        <taxon>Bacillales</taxon>
        <taxon>Staphylococcaceae</taxon>
        <taxon>Staphylococcus</taxon>
    </lineage>
</organism>
<dbReference type="EC" id="2.5.1.-" evidence="1"/>
<dbReference type="EMBL" id="X89875">
    <property type="protein sequence ID" value="CAA61967.1"/>
    <property type="molecule type" value="Genomic_DNA"/>
</dbReference>
<dbReference type="PIR" id="S58181">
    <property type="entry name" value="S58181"/>
</dbReference>
<dbReference type="RefSeq" id="WP_011276918.1">
    <property type="nucleotide sequence ID" value="NZ_JAKVGL010000061.1"/>
</dbReference>
<dbReference type="SMR" id="Q55317"/>
<dbReference type="OMA" id="RDEKPHM"/>
<dbReference type="GO" id="GO:0005737">
    <property type="term" value="C:cytoplasm"/>
    <property type="evidence" value="ECO:0007669"/>
    <property type="project" value="UniProtKB-SubCell"/>
</dbReference>
<dbReference type="GO" id="GO:0000287">
    <property type="term" value="F:magnesium ion binding"/>
    <property type="evidence" value="ECO:0007669"/>
    <property type="project" value="UniProtKB-UniRule"/>
</dbReference>
<dbReference type="GO" id="GO:0016765">
    <property type="term" value="F:transferase activity, transferring alkyl or aryl (other than methyl) groups"/>
    <property type="evidence" value="ECO:0007669"/>
    <property type="project" value="UniProtKB-UniRule"/>
</dbReference>
<dbReference type="GO" id="GO:0046677">
    <property type="term" value="P:response to antibiotic"/>
    <property type="evidence" value="ECO:0007669"/>
    <property type="project" value="UniProtKB-UniRule"/>
</dbReference>
<dbReference type="Gene3D" id="3.10.180.10">
    <property type="entry name" value="2,3-Dihydroxybiphenyl 1,2-Dioxygenase, domain 1"/>
    <property type="match status" value="1"/>
</dbReference>
<dbReference type="HAMAP" id="MF_01512">
    <property type="entry name" value="FosB"/>
    <property type="match status" value="1"/>
</dbReference>
<dbReference type="InterPro" id="IPR051332">
    <property type="entry name" value="Fosfomycin_Res_Enzymes"/>
</dbReference>
<dbReference type="InterPro" id="IPR029068">
    <property type="entry name" value="Glyas_Bleomycin-R_OHBP_Dase"/>
</dbReference>
<dbReference type="InterPro" id="IPR004360">
    <property type="entry name" value="Glyas_Fos-R_dOase_dom"/>
</dbReference>
<dbReference type="InterPro" id="IPR022858">
    <property type="entry name" value="Metallothiol_Trafse_FosB"/>
</dbReference>
<dbReference type="InterPro" id="IPR037523">
    <property type="entry name" value="VOC"/>
</dbReference>
<dbReference type="NCBIfam" id="NF000493">
    <property type="entry name" value="Fos_BSH"/>
    <property type="match status" value="1"/>
</dbReference>
<dbReference type="NCBIfam" id="NF000085">
    <property type="entry name" value="Fos_BSH_Saur"/>
    <property type="match status" value="1"/>
</dbReference>
<dbReference type="NCBIfam" id="NF003152">
    <property type="entry name" value="PRK04101.1"/>
    <property type="match status" value="1"/>
</dbReference>
<dbReference type="PANTHER" id="PTHR36113:SF6">
    <property type="entry name" value="FOSFOMYCIN RESISTANCE PROTEIN FOSX"/>
    <property type="match status" value="1"/>
</dbReference>
<dbReference type="PANTHER" id="PTHR36113">
    <property type="entry name" value="LYASE, PUTATIVE-RELATED-RELATED"/>
    <property type="match status" value="1"/>
</dbReference>
<dbReference type="Pfam" id="PF00903">
    <property type="entry name" value="Glyoxalase"/>
    <property type="match status" value="1"/>
</dbReference>
<dbReference type="SUPFAM" id="SSF54593">
    <property type="entry name" value="Glyoxalase/Bleomycin resistance protein/Dihydroxybiphenyl dioxygenase"/>
    <property type="match status" value="1"/>
</dbReference>
<dbReference type="PROSITE" id="PS51819">
    <property type="entry name" value="VOC"/>
    <property type="match status" value="1"/>
</dbReference>
<accession>Q55317</accession>
<feature type="chain" id="PRO_0000164041" description="Metallothiol transferase FosB">
    <location>
        <begin position="1"/>
        <end position="139"/>
    </location>
</feature>
<feature type="domain" description="VOC" evidence="2">
    <location>
        <begin position="4"/>
        <end position="119"/>
    </location>
</feature>
<feature type="active site" description="Proton donor/acceptor" evidence="2">
    <location>
        <position position="115"/>
    </location>
</feature>
<feature type="binding site" evidence="1">
    <location>
        <position position="7"/>
    </location>
    <ligand>
        <name>Mg(2+)</name>
        <dbReference type="ChEBI" id="CHEBI:18420"/>
    </ligand>
</feature>
<feature type="binding site" evidence="1">
    <location>
        <position position="66"/>
    </location>
    <ligand>
        <name>Mg(2+)</name>
        <dbReference type="ChEBI" id="CHEBI:18420"/>
    </ligand>
</feature>
<feature type="binding site" evidence="1">
    <location>
        <position position="115"/>
    </location>
    <ligand>
        <name>Mg(2+)</name>
        <dbReference type="ChEBI" id="CHEBI:18420"/>
    </ligand>
</feature>
<keyword id="KW-0046">Antibiotic resistance</keyword>
<keyword id="KW-0963">Cytoplasm</keyword>
<keyword id="KW-0460">Magnesium</keyword>
<keyword id="KW-0479">Metal-binding</keyword>
<keyword id="KW-0614">Plasmid</keyword>
<keyword id="KW-0808">Transferase</keyword>
<comment type="function">
    <text evidence="1">Metallothiol transferase which confers resistance to fosfomycin by catalyzing the addition of a thiol cofactor to fosfomycin. L-cysteine is probably the physiological thiol donor.</text>
</comment>
<comment type="cofactor">
    <cofactor evidence="1">
        <name>Mg(2+)</name>
        <dbReference type="ChEBI" id="CHEBI:18420"/>
    </cofactor>
</comment>
<comment type="subunit">
    <text evidence="1">Homodimer.</text>
</comment>
<comment type="subcellular location">
    <subcellularLocation>
        <location evidence="1">Cytoplasm</location>
    </subcellularLocation>
</comment>
<comment type="similarity">
    <text evidence="1">Belongs to the fosfomycin resistance protein family. FosB subfamily.</text>
</comment>
<geneLocation type="plasmid"/>
<proteinExistence type="inferred from homology"/>
<gene>
    <name evidence="1" type="primary">fosB</name>
</gene>